<evidence type="ECO:0000250" key="1">
    <source>
        <dbReference type="UniProtKB" id="P12657"/>
    </source>
</evidence>
<evidence type="ECO:0000255" key="2"/>
<evidence type="ECO:0000255" key="3">
    <source>
        <dbReference type="PROSITE-ProRule" id="PRU00498"/>
    </source>
</evidence>
<evidence type="ECO:0000255" key="4">
    <source>
        <dbReference type="PROSITE-ProRule" id="PRU00521"/>
    </source>
</evidence>
<evidence type="ECO:0000256" key="5">
    <source>
        <dbReference type="SAM" id="MobiDB-lite"/>
    </source>
</evidence>
<evidence type="ECO:0000269" key="6">
    <source>
    </source>
</evidence>
<evidence type="ECO:0000269" key="7">
    <source>
    </source>
</evidence>
<evidence type="ECO:0000269" key="8">
    <source>
    </source>
</evidence>
<evidence type="ECO:0000303" key="9">
    <source ref="4"/>
</evidence>
<evidence type="ECO:0000305" key="10"/>
<evidence type="ECO:0000312" key="11">
    <source>
        <dbReference type="PDB" id="6WJC"/>
    </source>
</evidence>
<evidence type="ECO:0007744" key="12">
    <source>
        <dbReference type="PDB" id="6WJC"/>
    </source>
</evidence>
<evidence type="ECO:0007829" key="13">
    <source>
        <dbReference type="PDB" id="6OIJ"/>
    </source>
</evidence>
<evidence type="ECO:0007829" key="14">
    <source>
        <dbReference type="PDB" id="6WJC"/>
    </source>
</evidence>
<evidence type="ECO:0007829" key="15">
    <source>
        <dbReference type="PDB" id="6ZFZ"/>
    </source>
</evidence>
<evidence type="ECO:0007829" key="16">
    <source>
        <dbReference type="PDB" id="6ZG4"/>
    </source>
</evidence>
<gene>
    <name type="primary">CHRM1</name>
</gene>
<accession>P11229</accession>
<accession>Q96RH1</accession>
<reference key="1">
    <citation type="journal article" date="1987" name="Nucleic Acids Res.">
        <title>Sequence of the gene encoding the human M1 muscarinic acetylcholine receptor.</title>
        <authorList>
            <person name="Allard W.J."/>
            <person name="Sigal I.S."/>
            <person name="Dixon R.A.F."/>
        </authorList>
    </citation>
    <scope>NUCLEOTIDE SEQUENCE [GENOMIC DNA]</scope>
</reference>
<reference key="2">
    <citation type="journal article" date="1990" name="Nucleic Acids Res.">
        <title>Isolation of the human ml (Hml) muscarinic acetylcholine receptor gene by PCR amplification.</title>
        <authorList>
            <person name="Chapman C.G."/>
            <person name="Browne M.J."/>
        </authorList>
    </citation>
    <scope>NUCLEOTIDE SEQUENCE [GENOMIC DNA]</scope>
</reference>
<reference key="3">
    <citation type="journal article" date="1987" name="EMBO J.">
        <title>Distinct primary structures, ligand-binding properties and tissue-specific expression of four human muscarinic acetylcholine receptors.</title>
        <authorList>
            <person name="Peralta E.G."/>
            <person name="Ashkenazi A."/>
            <person name="Winslow J.W."/>
            <person name="Smith D.H."/>
            <person name="Ramachandran J."/>
            <person name="Capon D.J."/>
        </authorList>
    </citation>
    <scope>NUCLEOTIDE SEQUENCE [GENOMIC DNA]</scope>
</reference>
<reference key="4">
    <citation type="submission" date="2001-05" db="EMBL/GenBank/DDBJ databases">
        <title>Cloning Cholinergic Receptors in Human Keratinocytes.</title>
        <authorList>
            <person name="Arredondo J."/>
            <person name="Grando S.A."/>
        </authorList>
    </citation>
    <scope>NUCLEOTIDE SEQUENCE [MRNA] (ISOFORM 2)</scope>
</reference>
<reference key="5">
    <citation type="submission" date="2002-04" db="EMBL/GenBank/DDBJ databases">
        <title>cDNA clones of human proteins involved in signal transduction sequenced by the Guthrie cDNA resource center (www.cdna.org).</title>
        <authorList>
            <person name="Puhl H.L. III"/>
            <person name="Ikeda S.R."/>
            <person name="Aronstam R.S."/>
        </authorList>
    </citation>
    <scope>NUCLEOTIDE SEQUENCE [LARGE SCALE MRNA] (ISOFORM 1)</scope>
    <source>
        <tissue>Brain</tissue>
    </source>
</reference>
<reference key="6">
    <citation type="journal article" date="2006" name="Nature">
        <title>Human chromosome 11 DNA sequence and analysis including novel gene identification.</title>
        <authorList>
            <person name="Taylor T.D."/>
            <person name="Noguchi H."/>
            <person name="Totoki Y."/>
            <person name="Toyoda A."/>
            <person name="Kuroki Y."/>
            <person name="Dewar K."/>
            <person name="Lloyd C."/>
            <person name="Itoh T."/>
            <person name="Takeda T."/>
            <person name="Kim D.-W."/>
            <person name="She X."/>
            <person name="Barlow K.F."/>
            <person name="Bloom T."/>
            <person name="Bruford E."/>
            <person name="Chang J.L."/>
            <person name="Cuomo C.A."/>
            <person name="Eichler E."/>
            <person name="FitzGerald M.G."/>
            <person name="Jaffe D.B."/>
            <person name="LaButti K."/>
            <person name="Nicol R."/>
            <person name="Park H.-S."/>
            <person name="Seaman C."/>
            <person name="Sougnez C."/>
            <person name="Yang X."/>
            <person name="Zimmer A.R."/>
            <person name="Zody M.C."/>
            <person name="Birren B.W."/>
            <person name="Nusbaum C."/>
            <person name="Fujiyama A."/>
            <person name="Hattori M."/>
            <person name="Rogers J."/>
            <person name="Lander E.S."/>
            <person name="Sakaki Y."/>
        </authorList>
    </citation>
    <scope>NUCLEOTIDE SEQUENCE [LARGE SCALE GENOMIC DNA]</scope>
</reference>
<reference key="7">
    <citation type="journal article" date="2004" name="Genome Res.">
        <title>The status, quality, and expansion of the NIH full-length cDNA project: the Mammalian Gene Collection (MGC).</title>
        <authorList>
            <consortium name="The MGC Project Team"/>
        </authorList>
    </citation>
    <scope>NUCLEOTIDE SEQUENCE [LARGE SCALE MRNA] (ISOFORM 1)</scope>
    <source>
        <tissue>Brain</tissue>
    </source>
</reference>
<reference key="8">
    <citation type="journal article" date="1992" name="Biochem. Biophys. Res. Commun.">
        <title>Mutational analysis of third cytoplasmic loop domains in G-protein coupling of the HM1 muscarinic receptor.</title>
        <authorList>
            <person name="Arden J.R."/>
            <person name="Nagata O."/>
            <person name="Shockley M.S."/>
            <person name="Philip M."/>
            <person name="Lameh J."/>
            <person name="Sadee W."/>
        </authorList>
    </citation>
    <scope>MUTAGENESIS</scope>
</reference>
<reference key="9">
    <citation type="journal article" date="2004" name="J. Neurochem.">
        <title>Identification of a novel family of G protein-coupled receptor associated sorting proteins.</title>
        <authorList>
            <person name="Simonin F."/>
            <person name="Karcher P."/>
            <person name="Boeuf J.J.-M."/>
            <person name="Matifas A."/>
            <person name="Kieffer B.L."/>
        </authorList>
    </citation>
    <scope>INTERACTION WITH GPRASP2</scope>
</reference>
<reference key="10">
    <citation type="journal article" date="2011" name="Mol. Pharmacol.">
        <title>Regulation of M(3) muscarinic receptor expression and function by transmembrane protein 147.</title>
        <authorList>
            <person name="Rosemond E."/>
            <person name="Rossi M."/>
            <person name="McMillin S.M."/>
            <person name="Scarselli M."/>
            <person name="Donaldson J.G."/>
            <person name="Wess J."/>
        </authorList>
    </citation>
    <scope>INTERACTION WITH TMEM147</scope>
</reference>
<reference evidence="11" key="11">
    <citation type="journal article" date="2020" name="Science">
        <title>Structure and selectivity engineering of the M1 muscarinic receptor toxin complex.</title>
        <authorList>
            <person name="Maeda S."/>
            <person name="Xu J."/>
            <person name="Kadji F.M.N."/>
            <person name="Clark M.J."/>
            <person name="Zhao J."/>
            <person name="Tsutsumi N."/>
            <person name="Aoki J."/>
            <person name="Sunahara R.K."/>
            <person name="Inoue A."/>
            <person name="Garcia K.C."/>
            <person name="Kobilka B.K."/>
        </authorList>
    </citation>
    <scope>X-RAY CRYSTALLOGRAPHY (2.55 ANGSTROMS) OF 2-218 AND 355-460 IN COMPLEX WITH SNAKE VENOM MUSCARINIC TOXIN 7</scope>
    <scope>TOPOLOGY</scope>
    <scope>DISULFIDE BONDS</scope>
</reference>
<feature type="chain" id="PRO_0000069015" description="Muscarinic acetylcholine receptor M1">
    <location>
        <begin position="1"/>
        <end position="460"/>
    </location>
</feature>
<feature type="topological domain" description="Extracellular" evidence="8 12">
    <location>
        <begin position="1"/>
        <end position="22"/>
    </location>
</feature>
<feature type="transmembrane region" description="Helical; Name=1" evidence="8 12">
    <location>
        <begin position="23"/>
        <end position="48"/>
    </location>
</feature>
<feature type="topological domain" description="Cytoplasmic" evidence="8 12">
    <location>
        <begin position="49"/>
        <end position="62"/>
    </location>
</feature>
<feature type="transmembrane region" description="Helical; Name=2" evidence="8 12">
    <location>
        <begin position="63"/>
        <end position="84"/>
    </location>
</feature>
<feature type="topological domain" description="Extracellular" evidence="8 12">
    <location>
        <begin position="85"/>
        <end position="95"/>
    </location>
</feature>
<feature type="transmembrane region" description="Helical; Name=3" evidence="8 12">
    <location>
        <begin position="96"/>
        <end position="121"/>
    </location>
</feature>
<feature type="topological domain" description="Cytoplasmic" evidence="8 12">
    <location>
        <begin position="122"/>
        <end position="142"/>
    </location>
</feature>
<feature type="transmembrane region" description="Helical; Name=4" evidence="8 12">
    <location>
        <begin position="143"/>
        <end position="164"/>
    </location>
</feature>
<feature type="topological domain" description="Extracellular" evidence="8 12">
    <location>
        <begin position="165"/>
        <end position="185"/>
    </location>
</feature>
<feature type="transmembrane region" description="Helical; Name=5" evidence="8 12">
    <location>
        <begin position="186"/>
        <end position="209"/>
    </location>
</feature>
<feature type="topological domain" description="Cytoplasmic" evidence="8 12">
    <location>
        <begin position="210"/>
        <end position="366"/>
    </location>
</feature>
<feature type="transmembrane region" description="Helical; Name=6" evidence="8 12">
    <location>
        <begin position="367"/>
        <end position="390"/>
    </location>
</feature>
<feature type="topological domain" description="Extracellular" evidence="8 12">
    <location>
        <begin position="391"/>
        <end position="397"/>
    </location>
</feature>
<feature type="transmembrane region" description="Helical; Name=7" evidence="8 12">
    <location>
        <begin position="398"/>
        <end position="420"/>
    </location>
</feature>
<feature type="topological domain" description="Cytoplasmic" evidence="8 12">
    <location>
        <begin position="421"/>
        <end position="460"/>
    </location>
</feature>
<feature type="region of interest" description="Disordered" evidence="5">
    <location>
        <begin position="225"/>
        <end position="256"/>
    </location>
</feature>
<feature type="region of interest" description="Disordered" evidence="5">
    <location>
        <begin position="274"/>
        <end position="297"/>
    </location>
</feature>
<feature type="region of interest" description="Disordered" evidence="5">
    <location>
        <begin position="310"/>
        <end position="351"/>
    </location>
</feature>
<feature type="compositionally biased region" description="Low complexity" evidence="5">
    <location>
        <begin position="238"/>
        <end position="247"/>
    </location>
</feature>
<feature type="compositionally biased region" description="Basic residues" evidence="5">
    <location>
        <begin position="328"/>
        <end position="343"/>
    </location>
</feature>
<feature type="site" description="Subtype-specific residue that binds to snake venom muscarinic toxin 7" evidence="8">
    <location>
        <position position="170"/>
    </location>
</feature>
<feature type="site" description="Binds to snake venom muscarinic toxin 7" evidence="8">
    <location>
        <position position="172"/>
    </location>
</feature>
<feature type="site" description="Subtype-specific residue that binds to snake venom muscarinic toxin 7" evidence="8">
    <location>
        <position position="174"/>
    </location>
</feature>
<feature type="site" description="Subtype-specific residue that binds to snake venom muscarinic toxin 7" evidence="8">
    <location>
        <position position="397"/>
    </location>
</feature>
<feature type="site" description="Subtype-specific residue that binds to snake venom muscarinic toxin 7" evidence="8">
    <location>
        <position position="401"/>
    </location>
</feature>
<feature type="modified residue" description="Phosphothreonine" evidence="1">
    <location>
        <position position="230"/>
    </location>
</feature>
<feature type="modified residue" description="Phosphothreonine" evidence="2">
    <location>
        <position position="428"/>
    </location>
</feature>
<feature type="modified residue" description="Phosphoserine" evidence="2">
    <location>
        <position position="451"/>
    </location>
</feature>
<feature type="modified residue" description="Phosphothreonine" evidence="2">
    <location>
        <position position="455"/>
    </location>
</feature>
<feature type="modified residue" description="Phosphoserine" evidence="2">
    <location>
        <position position="457"/>
    </location>
</feature>
<feature type="glycosylation site" description="N-linked (GlcNAc...) asparagine" evidence="3">
    <location>
        <position position="2"/>
    </location>
</feature>
<feature type="glycosylation site" description="N-linked (GlcNAc...) asparagine" evidence="3">
    <location>
        <position position="12"/>
    </location>
</feature>
<feature type="disulfide bond" evidence="4">
    <location>
        <begin position="98"/>
        <end position="178"/>
    </location>
</feature>
<feature type="splice variant" id="VSP_056651" description="In isoform 2." evidence="9">
    <location>
        <begin position="455"/>
        <end position="460"/>
    </location>
</feature>
<feature type="sequence conflict" description="In Ref. 3; CAA33334." evidence="10" ref="3">
    <original>V</original>
    <variation>M</variation>
    <location>
        <position position="173"/>
    </location>
</feature>
<feature type="helix" evidence="15">
    <location>
        <begin position="27"/>
        <end position="52"/>
    </location>
</feature>
<feature type="helix" evidence="15">
    <location>
        <begin position="54"/>
        <end position="56"/>
    </location>
</feature>
<feature type="helix" evidence="15">
    <location>
        <begin position="59"/>
        <end position="76"/>
    </location>
</feature>
<feature type="helix" evidence="15">
    <location>
        <begin position="78"/>
        <end position="88"/>
    </location>
</feature>
<feature type="helix" evidence="15">
    <location>
        <begin position="95"/>
        <end position="128"/>
    </location>
</feature>
<feature type="turn" evidence="15">
    <location>
        <begin position="130"/>
        <end position="132"/>
    </location>
</feature>
<feature type="helix" evidence="15">
    <location>
        <begin position="133"/>
        <end position="135"/>
    </location>
</feature>
<feature type="helix" evidence="15">
    <location>
        <begin position="139"/>
        <end position="168"/>
    </location>
</feature>
<feature type="helix" evidence="16">
    <location>
        <begin position="182"/>
        <end position="184"/>
    </location>
</feature>
<feature type="helix" evidence="15">
    <location>
        <begin position="186"/>
        <end position="196"/>
    </location>
</feature>
<feature type="helix" evidence="15">
    <location>
        <begin position="198"/>
        <end position="219"/>
    </location>
</feature>
<feature type="helix" evidence="15">
    <location>
        <begin position="362"/>
        <end position="390"/>
    </location>
</feature>
<feature type="strand" evidence="14">
    <location>
        <begin position="391"/>
        <end position="393"/>
    </location>
</feature>
<feature type="helix" evidence="15">
    <location>
        <begin position="397"/>
        <end position="408"/>
    </location>
</feature>
<feature type="helix" evidence="15">
    <location>
        <begin position="410"/>
        <end position="421"/>
    </location>
</feature>
<feature type="helix" evidence="15">
    <location>
        <begin position="423"/>
        <end position="437"/>
    </location>
</feature>
<feature type="helix" evidence="13">
    <location>
        <begin position="439"/>
        <end position="441"/>
    </location>
</feature>
<comment type="function">
    <text>The muscarinic acetylcholine receptor mediates various cellular responses, including inhibition of adenylate cyclase, breakdown of phosphoinositides and modulation of potassium channels through the action of G proteins. Primary transducing effect is Pi turnover.</text>
</comment>
<comment type="subunit">
    <text evidence="6 7">Interacts with GPRASP2 (PubMed:15086532). Interacts with TMEM147 (PubMed:21056967).</text>
</comment>
<comment type="subcellular location">
    <subcellularLocation>
        <location>Cell membrane</location>
        <topology>Multi-pass membrane protein</topology>
    </subcellularLocation>
    <subcellularLocation>
        <location>Postsynaptic cell membrane</location>
        <topology>Multi-pass membrane protein</topology>
    </subcellularLocation>
</comment>
<comment type="alternative products">
    <event type="alternative splicing"/>
    <isoform>
        <id>P11229-1</id>
        <name>1</name>
        <sequence type="displayed"/>
    </isoform>
    <isoform>
        <id>P11229-2</id>
        <name>2</name>
        <sequence type="described" ref="VSP_056651"/>
    </isoform>
</comment>
<comment type="similarity">
    <text evidence="4">Belongs to the G-protein coupled receptor 1 family. Muscarinic acetylcholine receptor subfamily. CHRM1 sub-subfamily.</text>
</comment>
<organism>
    <name type="scientific">Homo sapiens</name>
    <name type="common">Human</name>
    <dbReference type="NCBI Taxonomy" id="9606"/>
    <lineage>
        <taxon>Eukaryota</taxon>
        <taxon>Metazoa</taxon>
        <taxon>Chordata</taxon>
        <taxon>Craniata</taxon>
        <taxon>Vertebrata</taxon>
        <taxon>Euteleostomi</taxon>
        <taxon>Mammalia</taxon>
        <taxon>Eutheria</taxon>
        <taxon>Euarchontoglires</taxon>
        <taxon>Primates</taxon>
        <taxon>Haplorrhini</taxon>
        <taxon>Catarrhini</taxon>
        <taxon>Hominidae</taxon>
        <taxon>Homo</taxon>
    </lineage>
</organism>
<keyword id="KW-0002">3D-structure</keyword>
<keyword id="KW-0025">Alternative splicing</keyword>
<keyword id="KW-1003">Cell membrane</keyword>
<keyword id="KW-1015">Disulfide bond</keyword>
<keyword id="KW-0297">G-protein coupled receptor</keyword>
<keyword id="KW-0325">Glycoprotein</keyword>
<keyword id="KW-0472">Membrane</keyword>
<keyword id="KW-0597">Phosphoprotein</keyword>
<keyword id="KW-0628">Postsynaptic cell membrane</keyword>
<keyword id="KW-1267">Proteomics identification</keyword>
<keyword id="KW-0675">Receptor</keyword>
<keyword id="KW-1185">Reference proteome</keyword>
<keyword id="KW-0770">Synapse</keyword>
<keyword id="KW-0807">Transducer</keyword>
<keyword id="KW-0812">Transmembrane</keyword>
<keyword id="KW-1133">Transmembrane helix</keyword>
<name>ACM1_HUMAN</name>
<protein>
    <recommendedName>
        <fullName>Muscarinic acetylcholine receptor M1</fullName>
    </recommendedName>
</protein>
<sequence>MNTSAPPAVSPNITVLAPGKGPWQVAFIGITTGLLSLATVTGNLLVLISFKVNTELKTVNNYFLLSLACADLIIGTFSMNLYTTYLLMGHWALGTLACDLWLALDYVASNASVMNLLLISFDRYFSVTRPLSYRAKRTPRRAALMIGLAWLVSFVLWAPAILFWQYLVGERTVLAGQCYIQFLSQPIITFGTAMAAFYLPVTVMCTLYWRIYRETENRARELAALQGSETPGKGGGSSSSSERSQPGAEGSPETPPGRCCRCCRAPRLLQAYSWKEEEEEDEGSMESLTSSEGEEPGSEVVIKMPMVDPEAQAPTKQPPRSSPNTVKRPTKKGRDRAGKGQKPRGKEQLAKRKTFSLVKEKKAARTLSAILLAFILTWTPYNIMVLVSTFCKDCVPETLWELGYWLCYVNSTINPMCYALCNKAFRDTFRLLLLCRWDKRRWRKIPKRPGSVHRTPSRQC</sequence>
<proteinExistence type="evidence at protein level"/>
<dbReference type="EMBL" id="Y00508">
    <property type="protein sequence ID" value="CAA68560.1"/>
    <property type="molecule type" value="Genomic_DNA"/>
</dbReference>
<dbReference type="EMBL" id="X52068">
    <property type="protein sequence ID" value="CAA36291.1"/>
    <property type="molecule type" value="Genomic_DNA"/>
</dbReference>
<dbReference type="EMBL" id="X15263">
    <property type="protein sequence ID" value="CAA33334.1"/>
    <property type="molecule type" value="Genomic_DNA"/>
</dbReference>
<dbReference type="EMBL" id="AF385587">
    <property type="protein sequence ID" value="AAK68112.1"/>
    <property type="molecule type" value="mRNA"/>
</dbReference>
<dbReference type="EMBL" id="AF498915">
    <property type="protein sequence ID" value="AAM18938.1"/>
    <property type="molecule type" value="mRNA"/>
</dbReference>
<dbReference type="EMBL" id="AP000438">
    <property type="status" value="NOT_ANNOTATED_CDS"/>
    <property type="molecule type" value="Genomic_DNA"/>
</dbReference>
<dbReference type="EMBL" id="BC007740">
    <property type="protein sequence ID" value="AAH07740.1"/>
    <property type="molecule type" value="mRNA"/>
</dbReference>
<dbReference type="EMBL" id="BC022984">
    <property type="protein sequence ID" value="AAH22984.1"/>
    <property type="molecule type" value="mRNA"/>
</dbReference>
<dbReference type="CCDS" id="CCDS8040.1">
    <molecule id="P11229-1"/>
</dbReference>
<dbReference type="PIR" id="S09508">
    <property type="entry name" value="S09508"/>
</dbReference>
<dbReference type="RefSeq" id="NP_000729.2">
    <molecule id="P11229-1"/>
    <property type="nucleotide sequence ID" value="NM_000738.2"/>
</dbReference>
<dbReference type="RefSeq" id="XP_011543044.1">
    <molecule id="P11229-1"/>
    <property type="nucleotide sequence ID" value="XM_011544742.3"/>
</dbReference>
<dbReference type="RefSeq" id="XP_054223541.1">
    <molecule id="P11229-1"/>
    <property type="nucleotide sequence ID" value="XM_054367566.1"/>
</dbReference>
<dbReference type="PDB" id="5CXV">
    <property type="method" value="X-ray"/>
    <property type="resolution" value="2.70 A"/>
    <property type="chains" value="A=2-218, A=355-460"/>
</dbReference>
<dbReference type="PDB" id="6OIJ">
    <property type="method" value="EM"/>
    <property type="resolution" value="3.30 A"/>
    <property type="chains" value="R=2-460"/>
</dbReference>
<dbReference type="PDB" id="6WJC">
    <property type="method" value="X-ray"/>
    <property type="resolution" value="2.55 A"/>
    <property type="chains" value="A=2-218, A=355-460"/>
</dbReference>
<dbReference type="PDB" id="6ZFZ">
    <property type="method" value="X-ray"/>
    <property type="resolution" value="2.17 A"/>
    <property type="chains" value="A=27-219, A=355-438"/>
</dbReference>
<dbReference type="PDB" id="6ZG4">
    <property type="method" value="X-ray"/>
    <property type="resolution" value="2.33 A"/>
    <property type="chains" value="A=27-219, A=355-438"/>
</dbReference>
<dbReference type="PDB" id="6ZG9">
    <property type="method" value="X-ray"/>
    <property type="resolution" value="2.50 A"/>
    <property type="chains" value="A=27-219, A=355-438"/>
</dbReference>
<dbReference type="PDBsum" id="5CXV"/>
<dbReference type="PDBsum" id="6OIJ"/>
<dbReference type="PDBsum" id="6WJC"/>
<dbReference type="PDBsum" id="6ZFZ"/>
<dbReference type="PDBsum" id="6ZG4"/>
<dbReference type="PDBsum" id="6ZG9"/>
<dbReference type="EMDB" id="EMD-20078"/>
<dbReference type="SMR" id="P11229"/>
<dbReference type="BioGRID" id="107550">
    <property type="interactions" value="4"/>
</dbReference>
<dbReference type="CORUM" id="P11229"/>
<dbReference type="FunCoup" id="P11229">
    <property type="interactions" value="1107"/>
</dbReference>
<dbReference type="IntAct" id="P11229">
    <property type="interactions" value="5"/>
</dbReference>
<dbReference type="MINT" id="P11229"/>
<dbReference type="STRING" id="9606.ENSP00000306490"/>
<dbReference type="BindingDB" id="P11229"/>
<dbReference type="ChEMBL" id="CHEMBL216"/>
<dbReference type="DrugBank" id="DB13262">
    <property type="generic name" value="Aceclidine"/>
</dbReference>
<dbReference type="DrugBank" id="DB03128">
    <property type="generic name" value="Acetylcholine"/>
</dbReference>
<dbReference type="DrugBank" id="DB08897">
    <property type="generic name" value="Aclidinium"/>
</dbReference>
<dbReference type="DrugBank" id="DB16911">
    <property type="generic name" value="AF-710B"/>
</dbReference>
<dbReference type="DrugBank" id="DB05752">
    <property type="generic name" value="ALKS 27"/>
</dbReference>
<dbReference type="DrugBank" id="DB00321">
    <property type="generic name" value="Amitriptyline"/>
</dbReference>
<dbReference type="DrugBank" id="DB00543">
    <property type="generic name" value="Amoxapine"/>
</dbReference>
<dbReference type="DrugBank" id="DB00517">
    <property type="generic name" value="Anisotropine methylbromide"/>
</dbReference>
<dbReference type="DrugBank" id="DB04365">
    <property type="generic name" value="Arecoline"/>
</dbReference>
<dbReference type="DrugBank" id="DB01238">
    <property type="generic name" value="Aripiprazole"/>
</dbReference>
<dbReference type="DrugBank" id="DB14185">
    <property type="generic name" value="Aripiprazole lauroxil"/>
</dbReference>
<dbReference type="DrugBank" id="DB00572">
    <property type="generic name" value="Atropine"/>
</dbReference>
<dbReference type="DrugBank" id="DB00245">
    <property type="generic name" value="Benzatropine"/>
</dbReference>
<dbReference type="DrugBank" id="DB00767">
    <property type="generic name" value="Benzquinamide"/>
</dbReference>
<dbReference type="DrugBank" id="DB01019">
    <property type="generic name" value="Bethanechol"/>
</dbReference>
<dbReference type="DrugBank" id="DB00810">
    <property type="generic name" value="Biperiden"/>
</dbReference>
<dbReference type="DrugBank" id="DB05592">
    <property type="generic name" value="Blarcamesine"/>
</dbReference>
<dbReference type="DrugBank" id="DB09128">
    <property type="generic name" value="Brexpiprazole"/>
</dbReference>
<dbReference type="DrugBank" id="DB00835">
    <property type="generic name" value="Brompheniramine"/>
</dbReference>
<dbReference type="DrugBank" id="DB00354">
    <property type="generic name" value="Buclizine"/>
</dbReference>
<dbReference type="DrugBank" id="DB11504">
    <property type="generic name" value="Caramiphen"/>
</dbReference>
<dbReference type="DrugBank" id="DB00411">
    <property type="generic name" value="Carbamoylcholine"/>
</dbReference>
<dbReference type="DrugBank" id="DB00185">
    <property type="generic name" value="Cevimeline"/>
</dbReference>
<dbReference type="DrugBank" id="DB00477">
    <property type="generic name" value="Chlorpromazine"/>
</dbReference>
<dbReference type="DrugBank" id="DB01239">
    <property type="generic name" value="Chlorprothixene"/>
</dbReference>
<dbReference type="DrugBank" id="DB00568">
    <property type="generic name" value="Cinnarizine"/>
</dbReference>
<dbReference type="DrugBank" id="DB00771">
    <property type="generic name" value="Clidinium"/>
</dbReference>
<dbReference type="DrugBank" id="DB00363">
    <property type="generic name" value="Clozapine"/>
</dbReference>
<dbReference type="DrugBank" id="DB00907">
    <property type="generic name" value="Cocaine"/>
</dbReference>
<dbReference type="DrugBank" id="DB00979">
    <property type="generic name" value="Cyclopentolate"/>
</dbReference>
<dbReference type="DrugBank" id="DB00942">
    <property type="generic name" value="Cycrimine"/>
</dbReference>
<dbReference type="DrugBank" id="DB00434">
    <property type="generic name" value="Cyproheptadine"/>
</dbReference>
<dbReference type="DrugBank" id="DB00496">
    <property type="generic name" value="Darifenacin"/>
</dbReference>
<dbReference type="DrugBank" id="DB06421">
    <property type="generic name" value="Declopramide"/>
</dbReference>
<dbReference type="DrugBank" id="DB01151">
    <property type="generic name" value="Desipramine"/>
</dbReference>
<dbReference type="DrugBank" id="DB00804">
    <property type="generic name" value="Dicyclomine"/>
</dbReference>
<dbReference type="DrugBank" id="DB13720">
    <property type="generic name" value="Diphemanil"/>
</dbReference>
<dbReference type="DrugBank" id="DB01231">
    <property type="generic name" value="Diphenidol"/>
</dbReference>
<dbReference type="DrugBank" id="DB00280">
    <property type="generic name" value="Disopyramide"/>
</dbReference>
<dbReference type="DrugBank" id="DB09167">
    <property type="generic name" value="Dosulepin"/>
</dbReference>
<dbReference type="DrugBank" id="DB01142">
    <property type="generic name" value="Doxepin"/>
</dbReference>
<dbReference type="DrugBank" id="DB00366">
    <property type="generic name" value="Doxylamine"/>
</dbReference>
<dbReference type="DrugBank" id="DB01175">
    <property type="generic name" value="Escitalopram"/>
</dbReference>
<dbReference type="DrugBank" id="DB09194">
    <property type="generic name" value="Etoperidone"/>
</dbReference>
<dbReference type="DrugBank" id="DB06702">
    <property type="generic name" value="Fesoterodine"/>
</dbReference>
<dbReference type="DrugBank" id="DB01148">
    <property type="generic name" value="Flavoxate"/>
</dbReference>
<dbReference type="DrugBank" id="DB00875">
    <property type="generic name" value="Flupentixol"/>
</dbReference>
<dbReference type="DrugBank" id="DB00483">
    <property type="generic name" value="Gallamine triethiodide"/>
</dbReference>
<dbReference type="DrugBank" id="DB00986">
    <property type="generic name" value="Glycopyrronium"/>
</dbReference>
<dbReference type="DrugBank" id="DB06787">
    <property type="generic name" value="Hexocyclium"/>
</dbReference>
<dbReference type="DrugBank" id="DB11181">
    <property type="generic name" value="Homatropine"/>
</dbReference>
<dbReference type="DrugBank" id="DB00725">
    <property type="generic name" value="Homatropine methylbromide"/>
</dbReference>
<dbReference type="DrugBank" id="DB00424">
    <property type="generic name" value="Hyoscyamine"/>
</dbReference>
<dbReference type="DrugBank" id="DB09262">
    <property type="generic name" value="Imidafenacin"/>
</dbReference>
<dbReference type="DrugBank" id="DB00458">
    <property type="generic name" value="Imipramine"/>
</dbReference>
<dbReference type="DrugBank" id="DB00332">
    <property type="generic name" value="Ipratropium"/>
</dbReference>
<dbReference type="DrugBank" id="DB01221">
    <property type="generic name" value="Ketamine"/>
</dbReference>
<dbReference type="DrugBank" id="DB00408">
    <property type="generic name" value="Loxapine"/>
</dbReference>
<dbReference type="DrugBank" id="DB00934">
    <property type="generic name" value="Maprotiline"/>
</dbReference>
<dbReference type="DrugBank" id="DB04843">
    <property type="generic name" value="Mepenzolate"/>
</dbReference>
<dbReference type="DrugBank" id="DB00454">
    <property type="generic name" value="Meperidine"/>
</dbReference>
<dbReference type="DrugBank" id="DB06709">
    <property type="generic name" value="Methacholine"/>
</dbReference>
<dbReference type="DrugBank" id="DB00940">
    <property type="generic name" value="Methantheline"/>
</dbReference>
<dbReference type="DrugBank" id="DB01403">
    <property type="generic name" value="Methotrimeprazine"/>
</dbReference>
<dbReference type="DrugBank" id="DB00462">
    <property type="generic name" value="Methscopolamine bromide"/>
</dbReference>
<dbReference type="DrugBank" id="DB00340">
    <property type="generic name" value="Metixene"/>
</dbReference>
<dbReference type="DrugBank" id="DB01233">
    <property type="generic name" value="Metoclopramide"/>
</dbReference>
<dbReference type="DrugBank" id="DB00805">
    <property type="generic name" value="Minaprine"/>
</dbReference>
<dbReference type="DrugBank" id="DB01618">
    <property type="generic name" value="Molindone"/>
</dbReference>
<dbReference type="DrugBank" id="DB05152">
    <property type="generic name" value="NGX267"/>
</dbReference>
<dbReference type="DrugBank" id="DB00622">
    <property type="generic name" value="Nicardipine"/>
</dbReference>
<dbReference type="DrugBank" id="DB05766">
    <property type="generic name" value="Norclozapine"/>
</dbReference>
<dbReference type="DrugBank" id="DB00540">
    <property type="generic name" value="Nortriptyline"/>
</dbReference>
<dbReference type="DrugBank" id="DB00334">
    <property type="generic name" value="Olanzapine"/>
</dbReference>
<dbReference type="DrugBank" id="DB01062">
    <property type="generic name" value="Oxybutynin"/>
</dbReference>
<dbReference type="DrugBank" id="DB00383">
    <property type="generic name" value="Oxyphencyclimine"/>
</dbReference>
<dbReference type="DrugBank" id="DB00219">
    <property type="generic name" value="Oxyphenonium"/>
</dbReference>
<dbReference type="DrugBank" id="DB00715">
    <property type="generic name" value="Paroxetine"/>
</dbReference>
<dbReference type="DrugBank" id="DB01085">
    <property type="generic name" value="Pilocarpine"/>
</dbReference>
<dbReference type="DrugBank" id="DB00670">
    <property type="generic name" value="Pirenzepine"/>
</dbReference>
<dbReference type="DrugBank" id="DB06153">
    <property type="generic name" value="Pizotifen"/>
</dbReference>
<dbReference type="DrugBank" id="DB00387">
    <property type="generic name" value="Procyclidine"/>
</dbReference>
<dbReference type="DrugBank" id="DB00392">
    <property type="generic name" value="Profenamine"/>
</dbReference>
<dbReference type="DrugBank" id="DB00420">
    <property type="generic name" value="Promazine"/>
</dbReference>
<dbReference type="DrugBank" id="DB01069">
    <property type="generic name" value="Promethazine"/>
</dbReference>
<dbReference type="DrugBank" id="DB00782">
    <property type="generic name" value="Propantheline"/>
</dbReference>
<dbReference type="DrugBank" id="DB00777">
    <property type="generic name" value="Propiomazine"/>
</dbReference>
<dbReference type="DrugBank" id="DB12278">
    <property type="generic name" value="Propiverine"/>
</dbReference>
<dbReference type="DrugBank" id="DB11156">
    <property type="generic name" value="Pyrantel"/>
</dbReference>
<dbReference type="DrugBank" id="DB01224">
    <property type="generic name" value="Quetiapine"/>
</dbReference>
<dbReference type="DrugBank" id="DB11855">
    <property type="generic name" value="Revefenacin"/>
</dbReference>
<dbReference type="DrugBank" id="DB13581">
    <property type="generic name" value="Rociverine"/>
</dbReference>
<dbReference type="DrugBank" id="DB00747">
    <property type="generic name" value="Scopolamine"/>
</dbReference>
<dbReference type="DrugBank" id="DB07425">
    <property type="generic name" value="Sobetirome"/>
</dbReference>
<dbReference type="DrugBank" id="DB19325">
    <property type="generic name" value="Sofpironium"/>
</dbReference>
<dbReference type="DrugBank" id="DB01591">
    <property type="generic name" value="Solifenacin"/>
</dbReference>
<dbReference type="DrugBank" id="DB02010">
    <property type="generic name" value="Staurosporine"/>
</dbReference>
<dbReference type="DrugBank" id="DB18954">
    <property type="generic name" value="TAK-071"/>
</dbReference>
<dbReference type="DrugBank" id="DB00342">
    <property type="generic name" value="Terfenadine"/>
</dbReference>
<dbReference type="DrugBank" id="DB11235">
    <property type="generic name" value="Thonzylamine"/>
</dbReference>
<dbReference type="DrugBank" id="DB01409">
    <property type="generic name" value="Tiotropium"/>
</dbReference>
<dbReference type="DrugBank" id="DB01036">
    <property type="generic name" value="Tolterodine"/>
</dbReference>
<dbReference type="DrugBank" id="DB00193">
    <property type="generic name" value="Tramadol"/>
</dbReference>
<dbReference type="DrugBank" id="DB00505">
    <property type="generic name" value="Tridihexethyl"/>
</dbReference>
<dbReference type="DrugBank" id="DB00508">
    <property type="generic name" value="Triflupromazine"/>
</dbReference>
<dbReference type="DrugBank" id="DB00376">
    <property type="generic name" value="Trihexyphenidyl"/>
</dbReference>
<dbReference type="DrugBank" id="DB09089">
    <property type="generic name" value="Trimebutine"/>
</dbReference>
<dbReference type="DrugBank" id="DB00726">
    <property type="generic name" value="Trimipramine"/>
</dbReference>
<dbReference type="DrugBank" id="DB00809">
    <property type="generic name" value="Tropicamide"/>
</dbReference>
<dbReference type="DrugBank" id="DB00209">
    <property type="generic name" value="Trospium"/>
</dbReference>
<dbReference type="DrugBank" id="DB09076">
    <property type="generic name" value="Umeclidinium"/>
</dbReference>
<dbReference type="DrugBank" id="DB09185">
    <property type="generic name" value="Viloxazine"/>
</dbReference>
<dbReference type="DrugBank" id="DB15357">
    <property type="generic name" value="Xanomeline"/>
</dbReference>
<dbReference type="DrugBank" id="DB00246">
    <property type="generic name" value="Ziprasidone"/>
</dbReference>
<dbReference type="DrugCentral" id="P11229"/>
<dbReference type="GuidetoPHARMACOLOGY" id="13"/>
<dbReference type="GlyCosmos" id="P11229">
    <property type="glycosylation" value="2 sites, No reported glycans"/>
</dbReference>
<dbReference type="GlyGen" id="P11229">
    <property type="glycosylation" value="2 sites, 2 N-linked glycans (1 site)"/>
</dbReference>
<dbReference type="iPTMnet" id="P11229"/>
<dbReference type="PhosphoSitePlus" id="P11229"/>
<dbReference type="SwissPalm" id="P11229"/>
<dbReference type="BioMuta" id="CHRM1"/>
<dbReference type="DMDM" id="113118"/>
<dbReference type="MassIVE" id="P11229"/>
<dbReference type="PaxDb" id="9606-ENSP00000306490"/>
<dbReference type="PeptideAtlas" id="P11229"/>
<dbReference type="ProteomicsDB" id="52724">
    <molecule id="P11229-1"/>
</dbReference>
<dbReference type="ProteomicsDB" id="77961"/>
<dbReference type="ABCD" id="P11229">
    <property type="antibodies" value="12 sequenced antibodies"/>
</dbReference>
<dbReference type="Antibodypedia" id="2948">
    <property type="antibodies" value="320 antibodies from 36 providers"/>
</dbReference>
<dbReference type="DNASU" id="1128"/>
<dbReference type="Ensembl" id="ENST00000306960.4">
    <molecule id="P11229-1"/>
    <property type="protein sequence ID" value="ENSP00000306490.3"/>
    <property type="gene ID" value="ENSG00000168539.4"/>
</dbReference>
<dbReference type="Ensembl" id="ENST00000543973.1">
    <molecule id="P11229-2"/>
    <property type="protein sequence ID" value="ENSP00000441188.1"/>
    <property type="gene ID" value="ENSG00000168539.4"/>
</dbReference>
<dbReference type="GeneID" id="1128"/>
<dbReference type="KEGG" id="hsa:1128"/>
<dbReference type="MANE-Select" id="ENST00000306960.4">
    <property type="protein sequence ID" value="ENSP00000306490.3"/>
    <property type="RefSeq nucleotide sequence ID" value="NM_000738.3"/>
    <property type="RefSeq protein sequence ID" value="NP_000729.2"/>
</dbReference>
<dbReference type="UCSC" id="uc058cqg.1">
    <molecule id="P11229-1"/>
    <property type="organism name" value="human"/>
</dbReference>
<dbReference type="AGR" id="HGNC:1950"/>
<dbReference type="CTD" id="1128"/>
<dbReference type="DisGeNET" id="1128"/>
<dbReference type="GeneCards" id="CHRM1"/>
<dbReference type="HGNC" id="HGNC:1950">
    <property type="gene designation" value="CHRM1"/>
</dbReference>
<dbReference type="HPA" id="ENSG00000168539">
    <property type="expression patterns" value="Group enriched (brain, prostate, salivary gland)"/>
</dbReference>
<dbReference type="MalaCards" id="CHRM1"/>
<dbReference type="MIM" id="118510">
    <property type="type" value="gene"/>
</dbReference>
<dbReference type="neXtProt" id="NX_P11229"/>
<dbReference type="OpenTargets" id="ENSG00000168539"/>
<dbReference type="PharmGKB" id="PA26484"/>
<dbReference type="VEuPathDB" id="HostDB:ENSG00000168539"/>
<dbReference type="eggNOG" id="KOG4220">
    <property type="taxonomic scope" value="Eukaryota"/>
</dbReference>
<dbReference type="GeneTree" id="ENSGT00940000162301"/>
<dbReference type="HOGENOM" id="CLU_009579_11_2_1"/>
<dbReference type="InParanoid" id="P11229"/>
<dbReference type="OMA" id="CCCWGPR"/>
<dbReference type="OrthoDB" id="10071887at2759"/>
<dbReference type="PAN-GO" id="P11229">
    <property type="GO annotations" value="8 GO annotations based on evolutionary models"/>
</dbReference>
<dbReference type="PhylomeDB" id="P11229"/>
<dbReference type="TreeFam" id="TF320495"/>
<dbReference type="PathwayCommons" id="P11229"/>
<dbReference type="Reactome" id="R-HSA-390648">
    <property type="pathway name" value="Muscarinic acetylcholine receptors"/>
</dbReference>
<dbReference type="Reactome" id="R-HSA-416476">
    <property type="pathway name" value="G alpha (q) signalling events"/>
</dbReference>
<dbReference type="SignaLink" id="P11229"/>
<dbReference type="SIGNOR" id="P11229"/>
<dbReference type="BioGRID-ORCS" id="1128">
    <property type="hits" value="16 hits in 1157 CRISPR screens"/>
</dbReference>
<dbReference type="ChiTaRS" id="CHRM1">
    <property type="organism name" value="human"/>
</dbReference>
<dbReference type="GeneWiki" id="Muscarinic_acetylcholine_receptor_M1"/>
<dbReference type="GenomeRNAi" id="1128"/>
<dbReference type="Pharos" id="P11229">
    <property type="development level" value="Tclin"/>
</dbReference>
<dbReference type="PRO" id="PR:P11229"/>
<dbReference type="Proteomes" id="UP000005640">
    <property type="component" value="Chromosome 11"/>
</dbReference>
<dbReference type="RNAct" id="P11229">
    <property type="molecule type" value="protein"/>
</dbReference>
<dbReference type="Bgee" id="ENSG00000168539">
    <property type="expression patterns" value="Expressed in prefrontal cortex and 92 other cell types or tissues"/>
</dbReference>
<dbReference type="ExpressionAtlas" id="P11229">
    <property type="expression patterns" value="baseline and differential"/>
</dbReference>
<dbReference type="GO" id="GO:0043679">
    <property type="term" value="C:axon terminus"/>
    <property type="evidence" value="ECO:0007669"/>
    <property type="project" value="Ensembl"/>
</dbReference>
<dbReference type="GO" id="GO:0098981">
    <property type="term" value="C:cholinergic synapse"/>
    <property type="evidence" value="ECO:0007669"/>
    <property type="project" value="Ensembl"/>
</dbReference>
<dbReference type="GO" id="GO:0030425">
    <property type="term" value="C:dendrite"/>
    <property type="evidence" value="ECO:0000318"/>
    <property type="project" value="GO_Central"/>
</dbReference>
<dbReference type="GO" id="GO:0098978">
    <property type="term" value="C:glutamatergic synapse"/>
    <property type="evidence" value="ECO:0007669"/>
    <property type="project" value="Ensembl"/>
</dbReference>
<dbReference type="GO" id="GO:0016020">
    <property type="term" value="C:membrane"/>
    <property type="evidence" value="ECO:0000304"/>
    <property type="project" value="ProtInc"/>
</dbReference>
<dbReference type="GO" id="GO:0005886">
    <property type="term" value="C:plasma membrane"/>
    <property type="evidence" value="ECO:0000318"/>
    <property type="project" value="GO_Central"/>
</dbReference>
<dbReference type="GO" id="GO:0098839">
    <property type="term" value="C:postsynaptic density membrane"/>
    <property type="evidence" value="ECO:0007669"/>
    <property type="project" value="Ensembl"/>
</dbReference>
<dbReference type="GO" id="GO:0042734">
    <property type="term" value="C:presynaptic membrane"/>
    <property type="evidence" value="ECO:0007669"/>
    <property type="project" value="Ensembl"/>
</dbReference>
<dbReference type="GO" id="GO:0098685">
    <property type="term" value="C:Schaffer collateral - CA1 synapse"/>
    <property type="evidence" value="ECO:0007669"/>
    <property type="project" value="Ensembl"/>
</dbReference>
<dbReference type="GO" id="GO:0045202">
    <property type="term" value="C:synapse"/>
    <property type="evidence" value="ECO:0000318"/>
    <property type="project" value="GO_Central"/>
</dbReference>
<dbReference type="GO" id="GO:0016907">
    <property type="term" value="F:G protein-coupled acetylcholine receptor activity"/>
    <property type="evidence" value="ECO:0000318"/>
    <property type="project" value="GO_Central"/>
</dbReference>
<dbReference type="GO" id="GO:0004435">
    <property type="term" value="F:phosphatidylinositol-4,5-bisphosphate phospholipase C activity"/>
    <property type="evidence" value="ECO:0000304"/>
    <property type="project" value="ProtInc"/>
</dbReference>
<dbReference type="GO" id="GO:0007197">
    <property type="term" value="P:adenylate cyclase-inhibiting G protein-coupled acetylcholine receptor signaling pathway"/>
    <property type="evidence" value="ECO:0000318"/>
    <property type="project" value="GO_Central"/>
</dbReference>
<dbReference type="GO" id="GO:0007268">
    <property type="term" value="P:chemical synaptic transmission"/>
    <property type="evidence" value="ECO:0000318"/>
    <property type="project" value="GO_Central"/>
</dbReference>
<dbReference type="GO" id="GO:0050890">
    <property type="term" value="P:cognition"/>
    <property type="evidence" value="ECO:0007669"/>
    <property type="project" value="InterPro"/>
</dbReference>
<dbReference type="GO" id="GO:0007213">
    <property type="term" value="P:G protein-coupled acetylcholine receptor signaling pathway"/>
    <property type="evidence" value="ECO:0000304"/>
    <property type="project" value="ProtInc"/>
</dbReference>
<dbReference type="GO" id="GO:0007186">
    <property type="term" value="P:G protein-coupled receptor signaling pathway"/>
    <property type="evidence" value="ECO:0000304"/>
    <property type="project" value="ProtInc"/>
</dbReference>
<dbReference type="GO" id="GO:0007187">
    <property type="term" value="P:G protein-coupled receptor signaling pathway, coupled to cyclic nucleotide second messenger"/>
    <property type="evidence" value="ECO:0000318"/>
    <property type="project" value="GO_Central"/>
</dbReference>
<dbReference type="GO" id="GO:0007399">
    <property type="term" value="P:nervous system development"/>
    <property type="evidence" value="ECO:0000304"/>
    <property type="project" value="ProtInc"/>
</dbReference>
<dbReference type="GO" id="GO:0007274">
    <property type="term" value="P:neuromuscular synaptic transmission"/>
    <property type="evidence" value="ECO:0007669"/>
    <property type="project" value="Ensembl"/>
</dbReference>
<dbReference type="GO" id="GO:0007207">
    <property type="term" value="P:phospholipase C-activating G protein-coupled acetylcholine receptor signaling pathway"/>
    <property type="evidence" value="ECO:0000304"/>
    <property type="project" value="ProtInc"/>
</dbReference>
<dbReference type="GO" id="GO:0007200">
    <property type="term" value="P:phospholipase C-activating G protein-coupled receptor signaling pathway"/>
    <property type="evidence" value="ECO:0000304"/>
    <property type="project" value="ProtInc"/>
</dbReference>
<dbReference type="GO" id="GO:0090316">
    <property type="term" value="P:positive regulation of intracellular protein transport"/>
    <property type="evidence" value="ECO:0007669"/>
    <property type="project" value="Ensembl"/>
</dbReference>
<dbReference type="GO" id="GO:0043270">
    <property type="term" value="P:positive regulation of monoatomic ion transport"/>
    <property type="evidence" value="ECO:0000316"/>
    <property type="project" value="MGI"/>
</dbReference>
<dbReference type="GO" id="GO:0099170">
    <property type="term" value="P:postsynaptic modulation of chemical synaptic transmission"/>
    <property type="evidence" value="ECO:0007669"/>
    <property type="project" value="Ensembl"/>
</dbReference>
<dbReference type="GO" id="GO:0060251">
    <property type="term" value="P:regulation of glial cell proliferation"/>
    <property type="evidence" value="ECO:0000304"/>
    <property type="project" value="GO_Central"/>
</dbReference>
<dbReference type="GO" id="GO:0040012">
    <property type="term" value="P:regulation of locomotion"/>
    <property type="evidence" value="ECO:0007669"/>
    <property type="project" value="Ensembl"/>
</dbReference>
<dbReference type="GO" id="GO:0060078">
    <property type="term" value="P:regulation of postsynaptic membrane potential"/>
    <property type="evidence" value="ECO:0007669"/>
    <property type="project" value="Ensembl"/>
</dbReference>
<dbReference type="GO" id="GO:0046541">
    <property type="term" value="P:saliva secretion"/>
    <property type="evidence" value="ECO:0007669"/>
    <property type="project" value="InterPro"/>
</dbReference>
<dbReference type="GO" id="GO:0007165">
    <property type="term" value="P:signal transduction"/>
    <property type="evidence" value="ECO:0000304"/>
    <property type="project" value="GO_Central"/>
</dbReference>
<dbReference type="CDD" id="cd17790">
    <property type="entry name" value="7tmA_mAChR_M1"/>
    <property type="match status" value="1"/>
</dbReference>
<dbReference type="FunFam" id="1.20.1070.10:FF:000103">
    <property type="entry name" value="Muscarinic acetylcholine receptor"/>
    <property type="match status" value="1"/>
</dbReference>
<dbReference type="FunFam" id="1.20.1070.10:FF:000162">
    <property type="entry name" value="Muscarinic acetylcholine receptor"/>
    <property type="match status" value="1"/>
</dbReference>
<dbReference type="Gene3D" id="1.20.1070.10">
    <property type="entry name" value="Rhodopsin 7-helix transmembrane proteins"/>
    <property type="match status" value="1"/>
</dbReference>
<dbReference type="InterPro" id="IPR000276">
    <property type="entry name" value="GPCR_Rhodpsn"/>
</dbReference>
<dbReference type="InterPro" id="IPR017452">
    <property type="entry name" value="GPCR_Rhodpsn_7TM"/>
</dbReference>
<dbReference type="InterPro" id="IPR002228">
    <property type="entry name" value="Musac_Ach_M1_rcpt"/>
</dbReference>
<dbReference type="InterPro" id="IPR000995">
    <property type="entry name" value="Musac_Ach_rcpt"/>
</dbReference>
<dbReference type="PANTHER" id="PTHR24247">
    <property type="entry name" value="5-HYDROXYTRYPTAMINE RECEPTOR"/>
    <property type="match status" value="1"/>
</dbReference>
<dbReference type="PANTHER" id="PTHR24247:SF182">
    <property type="entry name" value="MUSCARINIC ACETYLCHOLINE RECEPTOR M1"/>
    <property type="match status" value="1"/>
</dbReference>
<dbReference type="Pfam" id="PF00001">
    <property type="entry name" value="7tm_1"/>
    <property type="match status" value="1"/>
</dbReference>
<dbReference type="PRINTS" id="PR00237">
    <property type="entry name" value="GPCRRHODOPSN"/>
</dbReference>
<dbReference type="PRINTS" id="PR00243">
    <property type="entry name" value="MUSCARINICR"/>
</dbReference>
<dbReference type="PRINTS" id="PR00538">
    <property type="entry name" value="MUSCRINICM1R"/>
</dbReference>
<dbReference type="SUPFAM" id="SSF81321">
    <property type="entry name" value="Family A G protein-coupled receptor-like"/>
    <property type="match status" value="1"/>
</dbReference>
<dbReference type="PROSITE" id="PS00237">
    <property type="entry name" value="G_PROTEIN_RECEP_F1_1"/>
    <property type="match status" value="1"/>
</dbReference>
<dbReference type="PROSITE" id="PS50262">
    <property type="entry name" value="G_PROTEIN_RECEP_F1_2"/>
    <property type="match status" value="1"/>
</dbReference>